<reference key="1">
    <citation type="submission" date="2003-06" db="EMBL/GenBank/DDBJ databases">
        <title>The complete genome sequence of Haemophilus ducreyi.</title>
        <authorList>
            <person name="Munson R.S. Jr."/>
            <person name="Ray W.C."/>
            <person name="Mahairas G."/>
            <person name="Sabo P."/>
            <person name="Mungur R."/>
            <person name="Johnson L."/>
            <person name="Nguyen D."/>
            <person name="Wang J."/>
            <person name="Forst C."/>
            <person name="Hood L."/>
        </authorList>
    </citation>
    <scope>NUCLEOTIDE SEQUENCE [LARGE SCALE GENOMIC DNA]</scope>
    <source>
        <strain>35000HP / ATCC 700724</strain>
    </source>
</reference>
<dbReference type="EC" id="4.1.1.49" evidence="1"/>
<dbReference type="EMBL" id="AE017143">
    <property type="protein sequence ID" value="AAP96152.1"/>
    <property type="molecule type" value="Genomic_DNA"/>
</dbReference>
<dbReference type="RefSeq" id="WP_010945201.1">
    <property type="nucleotide sequence ID" value="NC_002940.2"/>
</dbReference>
<dbReference type="SMR" id="Q7VLT3"/>
<dbReference type="STRING" id="233412.HD_1331"/>
<dbReference type="KEGG" id="hdu:HD_1331"/>
<dbReference type="eggNOG" id="COG1866">
    <property type="taxonomic scope" value="Bacteria"/>
</dbReference>
<dbReference type="HOGENOM" id="CLU_018247_0_1_6"/>
<dbReference type="OrthoDB" id="9806325at2"/>
<dbReference type="UniPathway" id="UPA00138"/>
<dbReference type="Proteomes" id="UP000001022">
    <property type="component" value="Chromosome"/>
</dbReference>
<dbReference type="GO" id="GO:0005829">
    <property type="term" value="C:cytosol"/>
    <property type="evidence" value="ECO:0007669"/>
    <property type="project" value="TreeGrafter"/>
</dbReference>
<dbReference type="GO" id="GO:0005524">
    <property type="term" value="F:ATP binding"/>
    <property type="evidence" value="ECO:0007669"/>
    <property type="project" value="UniProtKB-UniRule"/>
</dbReference>
<dbReference type="GO" id="GO:0046872">
    <property type="term" value="F:metal ion binding"/>
    <property type="evidence" value="ECO:0007669"/>
    <property type="project" value="UniProtKB-KW"/>
</dbReference>
<dbReference type="GO" id="GO:0004612">
    <property type="term" value="F:phosphoenolpyruvate carboxykinase (ATP) activity"/>
    <property type="evidence" value="ECO:0007669"/>
    <property type="project" value="UniProtKB-UniRule"/>
</dbReference>
<dbReference type="GO" id="GO:0006094">
    <property type="term" value="P:gluconeogenesis"/>
    <property type="evidence" value="ECO:0007669"/>
    <property type="project" value="UniProtKB-UniRule"/>
</dbReference>
<dbReference type="CDD" id="cd00484">
    <property type="entry name" value="PEPCK_ATP"/>
    <property type="match status" value="1"/>
</dbReference>
<dbReference type="FunFam" id="2.170.8.10:FF:000001">
    <property type="entry name" value="Phosphoenolpyruvate carboxykinase (ATP)"/>
    <property type="match status" value="1"/>
</dbReference>
<dbReference type="FunFam" id="3.40.449.10:FF:000001">
    <property type="entry name" value="Phosphoenolpyruvate carboxykinase (ATP)"/>
    <property type="match status" value="1"/>
</dbReference>
<dbReference type="Gene3D" id="3.90.228.20">
    <property type="match status" value="1"/>
</dbReference>
<dbReference type="Gene3D" id="3.40.449.10">
    <property type="entry name" value="Phosphoenolpyruvate Carboxykinase, domain 1"/>
    <property type="match status" value="1"/>
</dbReference>
<dbReference type="Gene3D" id="2.170.8.10">
    <property type="entry name" value="Phosphoenolpyruvate Carboxykinase, domain 2"/>
    <property type="match status" value="1"/>
</dbReference>
<dbReference type="HAMAP" id="MF_00453">
    <property type="entry name" value="PEPCK_ATP"/>
    <property type="match status" value="1"/>
</dbReference>
<dbReference type="InterPro" id="IPR001272">
    <property type="entry name" value="PEP_carboxykinase_ATP"/>
</dbReference>
<dbReference type="InterPro" id="IPR013035">
    <property type="entry name" value="PEP_carboxykinase_C"/>
</dbReference>
<dbReference type="InterPro" id="IPR008210">
    <property type="entry name" value="PEP_carboxykinase_N"/>
</dbReference>
<dbReference type="InterPro" id="IPR015994">
    <property type="entry name" value="PEPCK_ATP_CS"/>
</dbReference>
<dbReference type="NCBIfam" id="TIGR00224">
    <property type="entry name" value="pckA"/>
    <property type="match status" value="1"/>
</dbReference>
<dbReference type="NCBIfam" id="NF006819">
    <property type="entry name" value="PRK09344.1-1"/>
    <property type="match status" value="1"/>
</dbReference>
<dbReference type="NCBIfam" id="NF006820">
    <property type="entry name" value="PRK09344.1-2"/>
    <property type="match status" value="1"/>
</dbReference>
<dbReference type="NCBIfam" id="NF006821">
    <property type="entry name" value="PRK09344.1-3"/>
    <property type="match status" value="1"/>
</dbReference>
<dbReference type="PANTHER" id="PTHR30031:SF0">
    <property type="entry name" value="PHOSPHOENOLPYRUVATE CARBOXYKINASE (ATP)"/>
    <property type="match status" value="1"/>
</dbReference>
<dbReference type="PANTHER" id="PTHR30031">
    <property type="entry name" value="PHOSPHOENOLPYRUVATE CARBOXYKINASE ATP"/>
    <property type="match status" value="1"/>
</dbReference>
<dbReference type="Pfam" id="PF01293">
    <property type="entry name" value="PEPCK_ATP"/>
    <property type="match status" value="1"/>
</dbReference>
<dbReference type="PIRSF" id="PIRSF006294">
    <property type="entry name" value="PEP_crbxkin"/>
    <property type="match status" value="1"/>
</dbReference>
<dbReference type="SUPFAM" id="SSF68923">
    <property type="entry name" value="PEP carboxykinase N-terminal domain"/>
    <property type="match status" value="1"/>
</dbReference>
<dbReference type="SUPFAM" id="SSF53795">
    <property type="entry name" value="PEP carboxykinase-like"/>
    <property type="match status" value="1"/>
</dbReference>
<dbReference type="PROSITE" id="PS00532">
    <property type="entry name" value="PEPCK_ATP"/>
    <property type="match status" value="1"/>
</dbReference>
<organism>
    <name type="scientific">Haemophilus ducreyi (strain 35000HP / ATCC 700724)</name>
    <dbReference type="NCBI Taxonomy" id="233412"/>
    <lineage>
        <taxon>Bacteria</taxon>
        <taxon>Pseudomonadati</taxon>
        <taxon>Pseudomonadota</taxon>
        <taxon>Gammaproteobacteria</taxon>
        <taxon>Pasteurellales</taxon>
        <taxon>Pasteurellaceae</taxon>
        <taxon>Haemophilus</taxon>
    </lineage>
</organism>
<gene>
    <name evidence="1" type="primary">pckA</name>
    <name type="ordered locus">HD_1331</name>
</gene>
<keyword id="KW-0067">ATP-binding</keyword>
<keyword id="KW-0963">Cytoplasm</keyword>
<keyword id="KW-0210">Decarboxylase</keyword>
<keyword id="KW-0312">Gluconeogenesis</keyword>
<keyword id="KW-0456">Lyase</keyword>
<keyword id="KW-0464">Manganese</keyword>
<keyword id="KW-0479">Metal-binding</keyword>
<keyword id="KW-0547">Nucleotide-binding</keyword>
<keyword id="KW-1185">Reference proteome</keyword>
<comment type="function">
    <text evidence="1">Involved in the gluconeogenesis. Catalyzes the conversion of oxaloacetate (OAA) to phosphoenolpyruvate (PEP) through direct phosphoryl transfer between the nucleoside triphosphate and OAA.</text>
</comment>
<comment type="catalytic activity">
    <reaction evidence="1">
        <text>oxaloacetate + ATP = phosphoenolpyruvate + ADP + CO2</text>
        <dbReference type="Rhea" id="RHEA:18617"/>
        <dbReference type="ChEBI" id="CHEBI:16452"/>
        <dbReference type="ChEBI" id="CHEBI:16526"/>
        <dbReference type="ChEBI" id="CHEBI:30616"/>
        <dbReference type="ChEBI" id="CHEBI:58702"/>
        <dbReference type="ChEBI" id="CHEBI:456216"/>
        <dbReference type="EC" id="4.1.1.49"/>
    </reaction>
</comment>
<comment type="cofactor">
    <cofactor evidence="1">
        <name>Mn(2+)</name>
        <dbReference type="ChEBI" id="CHEBI:29035"/>
    </cofactor>
    <text evidence="1">Binds 1 Mn(2+) ion per subunit.</text>
</comment>
<comment type="pathway">
    <text evidence="1">Carbohydrate biosynthesis; gluconeogenesis.</text>
</comment>
<comment type="subunit">
    <text evidence="1">Monomer.</text>
</comment>
<comment type="subcellular location">
    <subcellularLocation>
        <location evidence="1">Cytoplasm</location>
    </subcellularLocation>
</comment>
<comment type="similarity">
    <text evidence="1">Belongs to the phosphoenolpyruvate carboxykinase (ATP) family.</text>
</comment>
<proteinExistence type="inferred from homology"/>
<protein>
    <recommendedName>
        <fullName evidence="1">Phosphoenolpyruvate carboxykinase (ATP)</fullName>
        <shortName evidence="1">PCK</shortName>
        <shortName evidence="1">PEP carboxykinase</shortName>
        <shortName evidence="1">PEPCK</shortName>
        <ecNumber evidence="1">4.1.1.49</ecNumber>
    </recommendedName>
</protein>
<sequence>MLSRIEQELAQLGITNVKEIVHNPSYEQLFEEEMKPGLDGFEKGVLTNSGAVAVDTGIFTGRSPKDKYIVYDETTKDNVWWTSEAVKNDNKPMSQSTWENLKDVVTHQLSNKRLFVIDAFCGASKTHRLAVRIITEVAWQAHFVKNMFIRPTADELKVFEPNFVVMNGSKVTNPNWQAQGLNSENFVAFNLTERIQLIGGTWYGGEMKKGMFSMMNYLLPLKNVASMHCSANVGKEGDVAVFFGLSGTGKTTLSTDPKRKLIGDDEHGWDEHGVFNYEGGCYAKTINLSEENEPDIYRAIRRDALLENVVVAEDGSIDFADKSKTENTRVSYPIYHIDNIVEPVSKAGHAQKVIFLTADAFGVLPPVAKLTPEQTKYYFLSGFTAKLAGTERGITEPTPTFSACFGAAFLSLHPTKYAEVLVQRMEAAGSQAYLVNTGWNGTGKRISIKDTRGIIDAILDGSIEKATTHALPVFDLRVPDALPGVDTAILDPRDTYAEAAEWHAKAEDLAARFVKNFEKYTTNEEGKALVAAGPQLSK</sequence>
<evidence type="ECO:0000255" key="1">
    <source>
        <dbReference type="HAMAP-Rule" id="MF_00453"/>
    </source>
</evidence>
<accession>Q7VLT3</accession>
<name>PCKA_HAEDU</name>
<feature type="chain" id="PRO_0000203823" description="Phosphoenolpyruvate carboxykinase (ATP)">
    <location>
        <begin position="1"/>
        <end position="538"/>
    </location>
</feature>
<feature type="binding site" evidence="1">
    <location>
        <position position="62"/>
    </location>
    <ligand>
        <name>substrate</name>
    </ligand>
</feature>
<feature type="binding site" evidence="1">
    <location>
        <position position="203"/>
    </location>
    <ligand>
        <name>substrate</name>
    </ligand>
</feature>
<feature type="binding site" evidence="1">
    <location>
        <position position="209"/>
    </location>
    <ligand>
        <name>ATP</name>
        <dbReference type="ChEBI" id="CHEBI:30616"/>
    </ligand>
</feature>
<feature type="binding site" evidence="1">
    <location>
        <position position="209"/>
    </location>
    <ligand>
        <name>Mn(2+)</name>
        <dbReference type="ChEBI" id="CHEBI:29035"/>
    </ligand>
</feature>
<feature type="binding site" evidence="1">
    <location>
        <position position="209"/>
    </location>
    <ligand>
        <name>substrate</name>
    </ligand>
</feature>
<feature type="binding site" evidence="1">
    <location>
        <position position="228"/>
    </location>
    <ligand>
        <name>ATP</name>
        <dbReference type="ChEBI" id="CHEBI:30616"/>
    </ligand>
</feature>
<feature type="binding site" evidence="1">
    <location>
        <position position="228"/>
    </location>
    <ligand>
        <name>Mn(2+)</name>
        <dbReference type="ChEBI" id="CHEBI:29035"/>
    </ligand>
</feature>
<feature type="binding site" evidence="1">
    <location>
        <begin position="244"/>
        <end position="252"/>
    </location>
    <ligand>
        <name>ATP</name>
        <dbReference type="ChEBI" id="CHEBI:30616"/>
    </ligand>
</feature>
<feature type="binding site" evidence="1">
    <location>
        <position position="265"/>
    </location>
    <ligand>
        <name>Mn(2+)</name>
        <dbReference type="ChEBI" id="CHEBI:29035"/>
    </ligand>
</feature>
<feature type="binding site" evidence="1">
    <location>
        <position position="293"/>
    </location>
    <ligand>
        <name>ATP</name>
        <dbReference type="ChEBI" id="CHEBI:30616"/>
    </ligand>
</feature>
<feature type="binding site" evidence="1">
    <location>
        <position position="329"/>
    </location>
    <ligand>
        <name>ATP</name>
        <dbReference type="ChEBI" id="CHEBI:30616"/>
    </ligand>
</feature>
<feature type="binding site" evidence="1">
    <location>
        <position position="329"/>
    </location>
    <ligand>
        <name>substrate</name>
    </ligand>
</feature>
<feature type="binding site" evidence="1">
    <location>
        <begin position="445"/>
        <end position="446"/>
    </location>
    <ligand>
        <name>ATP</name>
        <dbReference type="ChEBI" id="CHEBI:30616"/>
    </ligand>
</feature>
<feature type="binding site" evidence="1">
    <location>
        <position position="451"/>
    </location>
    <ligand>
        <name>ATP</name>
        <dbReference type="ChEBI" id="CHEBI:30616"/>
    </ligand>
</feature>